<keyword id="KW-1185">Reference proteome</keyword>
<keyword id="KW-0687">Ribonucleoprotein</keyword>
<keyword id="KW-0689">Ribosomal protein</keyword>
<keyword id="KW-0694">RNA-binding</keyword>
<keyword id="KW-0699">rRNA-binding</keyword>
<comment type="function">
    <text evidence="1">One of the primary rRNA binding proteins, it binds directly to 16S rRNA central domain where it helps coordinate assembly of the platform of the 30S subunit.</text>
</comment>
<comment type="subunit">
    <text evidence="1">Part of the 30S ribosomal subunit. Contacts proteins S5 and S12.</text>
</comment>
<comment type="similarity">
    <text evidence="1">Belongs to the universal ribosomal protein uS8 family.</text>
</comment>
<feature type="chain" id="PRO_0000290828" description="Small ribosomal subunit protein uS8">
    <location>
        <begin position="1"/>
        <end position="132"/>
    </location>
</feature>
<accession>Q250L8</accession>
<reference key="1">
    <citation type="journal article" date="2006" name="J. Bacteriol.">
        <title>Complete genome sequence of the dehalorespiring bacterium Desulfitobacterium hafniense Y51 and comparison with Dehalococcoides ethenogenes 195.</title>
        <authorList>
            <person name="Nonaka H."/>
            <person name="Keresztes G."/>
            <person name="Shinoda Y."/>
            <person name="Ikenaga Y."/>
            <person name="Abe M."/>
            <person name="Naito K."/>
            <person name="Inatomi K."/>
            <person name="Furukawa K."/>
            <person name="Inui M."/>
            <person name="Yukawa H."/>
        </authorList>
    </citation>
    <scope>NUCLEOTIDE SEQUENCE [LARGE SCALE GENOMIC DNA]</scope>
    <source>
        <strain>Y51</strain>
    </source>
</reference>
<protein>
    <recommendedName>
        <fullName evidence="1">Small ribosomal subunit protein uS8</fullName>
    </recommendedName>
    <alternativeName>
        <fullName evidence="2">30S ribosomal protein S8</fullName>
    </alternativeName>
</protein>
<sequence length="132" mass="14758">MAMSDPIADFLTRIRNAGMVYHDKVEVPASNVKKAIAEILKEEGFIKDVEYISDNKQGVIRCYLKYGQNRERVITGLKRISRPGLRVYAKKDEVPKVLGGLGVAILSTSKGLMTDKRARQEGLGGEVLCYIW</sequence>
<name>RS8_DESHY</name>
<proteinExistence type="inferred from homology"/>
<evidence type="ECO:0000255" key="1">
    <source>
        <dbReference type="HAMAP-Rule" id="MF_01302"/>
    </source>
</evidence>
<evidence type="ECO:0000305" key="2"/>
<gene>
    <name evidence="1" type="primary">rpsH</name>
    <name type="ordered locus">DSY0485</name>
</gene>
<organism>
    <name type="scientific">Desulfitobacterium hafniense (strain Y51)</name>
    <dbReference type="NCBI Taxonomy" id="138119"/>
    <lineage>
        <taxon>Bacteria</taxon>
        <taxon>Bacillati</taxon>
        <taxon>Bacillota</taxon>
        <taxon>Clostridia</taxon>
        <taxon>Eubacteriales</taxon>
        <taxon>Desulfitobacteriaceae</taxon>
        <taxon>Desulfitobacterium</taxon>
    </lineage>
</organism>
<dbReference type="EMBL" id="AP008230">
    <property type="protein sequence ID" value="BAE82274.1"/>
    <property type="molecule type" value="Genomic_DNA"/>
</dbReference>
<dbReference type="RefSeq" id="WP_011459105.1">
    <property type="nucleotide sequence ID" value="NC_007907.1"/>
</dbReference>
<dbReference type="SMR" id="Q250L8"/>
<dbReference type="STRING" id="138119.DSY0485"/>
<dbReference type="KEGG" id="dsy:DSY0485"/>
<dbReference type="eggNOG" id="COG0096">
    <property type="taxonomic scope" value="Bacteria"/>
</dbReference>
<dbReference type="HOGENOM" id="CLU_098428_0_2_9"/>
<dbReference type="Proteomes" id="UP000001946">
    <property type="component" value="Chromosome"/>
</dbReference>
<dbReference type="GO" id="GO:1990904">
    <property type="term" value="C:ribonucleoprotein complex"/>
    <property type="evidence" value="ECO:0007669"/>
    <property type="project" value="UniProtKB-KW"/>
</dbReference>
<dbReference type="GO" id="GO:0005840">
    <property type="term" value="C:ribosome"/>
    <property type="evidence" value="ECO:0007669"/>
    <property type="project" value="UniProtKB-KW"/>
</dbReference>
<dbReference type="GO" id="GO:0019843">
    <property type="term" value="F:rRNA binding"/>
    <property type="evidence" value="ECO:0007669"/>
    <property type="project" value="UniProtKB-UniRule"/>
</dbReference>
<dbReference type="GO" id="GO:0003735">
    <property type="term" value="F:structural constituent of ribosome"/>
    <property type="evidence" value="ECO:0007669"/>
    <property type="project" value="InterPro"/>
</dbReference>
<dbReference type="GO" id="GO:0006412">
    <property type="term" value="P:translation"/>
    <property type="evidence" value="ECO:0007669"/>
    <property type="project" value="UniProtKB-UniRule"/>
</dbReference>
<dbReference type="FunFam" id="3.30.1370.30:FF:000002">
    <property type="entry name" value="30S ribosomal protein S8"/>
    <property type="match status" value="1"/>
</dbReference>
<dbReference type="FunFam" id="3.30.1490.10:FF:000001">
    <property type="entry name" value="30S ribosomal protein S8"/>
    <property type="match status" value="1"/>
</dbReference>
<dbReference type="Gene3D" id="3.30.1370.30">
    <property type="match status" value="1"/>
</dbReference>
<dbReference type="Gene3D" id="3.30.1490.10">
    <property type="match status" value="1"/>
</dbReference>
<dbReference type="HAMAP" id="MF_01302_B">
    <property type="entry name" value="Ribosomal_uS8_B"/>
    <property type="match status" value="1"/>
</dbReference>
<dbReference type="InterPro" id="IPR000630">
    <property type="entry name" value="Ribosomal_uS8"/>
</dbReference>
<dbReference type="InterPro" id="IPR047863">
    <property type="entry name" value="Ribosomal_uS8_CS"/>
</dbReference>
<dbReference type="InterPro" id="IPR035987">
    <property type="entry name" value="Ribosomal_uS8_sf"/>
</dbReference>
<dbReference type="NCBIfam" id="NF001109">
    <property type="entry name" value="PRK00136.1"/>
    <property type="match status" value="1"/>
</dbReference>
<dbReference type="PANTHER" id="PTHR11758">
    <property type="entry name" value="40S RIBOSOMAL PROTEIN S15A"/>
    <property type="match status" value="1"/>
</dbReference>
<dbReference type="Pfam" id="PF00410">
    <property type="entry name" value="Ribosomal_S8"/>
    <property type="match status" value="1"/>
</dbReference>
<dbReference type="SUPFAM" id="SSF56047">
    <property type="entry name" value="Ribosomal protein S8"/>
    <property type="match status" value="1"/>
</dbReference>
<dbReference type="PROSITE" id="PS00053">
    <property type="entry name" value="RIBOSOMAL_S8"/>
    <property type="match status" value="1"/>
</dbReference>